<proteinExistence type="inferred from homology"/>
<feature type="chain" id="PRO_0000176887" description="Small ribosomal subunit protein bS6c">
    <location>
        <begin position="1"/>
        <end position="103"/>
    </location>
</feature>
<protein>
    <recommendedName>
        <fullName evidence="1">Small ribosomal subunit protein bS6c</fullName>
    </recommendedName>
    <alternativeName>
        <fullName evidence="2">30S ribosomal protein S6, chloroplastic</fullName>
    </alternativeName>
</protein>
<accession>Q6B922</accession>
<gene>
    <name evidence="1" type="primary">rps6</name>
    <name type="ordered locus">Grc000031</name>
</gene>
<comment type="function">
    <text evidence="1">Binds together with bS18 to 16S ribosomal RNA.</text>
</comment>
<comment type="subcellular location">
    <subcellularLocation>
        <location>Plastid</location>
        <location>Chloroplast</location>
    </subcellularLocation>
</comment>
<comment type="similarity">
    <text evidence="1">Belongs to the bacterial ribosomal protein bS6 family.</text>
</comment>
<dbReference type="EMBL" id="AY673996">
    <property type="protein sequence ID" value="AAT79613.1"/>
    <property type="molecule type" value="Genomic_DNA"/>
</dbReference>
<dbReference type="RefSeq" id="YP_063538.1">
    <property type="nucleotide sequence ID" value="NC_006137.1"/>
</dbReference>
<dbReference type="SMR" id="Q6B922"/>
<dbReference type="GeneID" id="2944009"/>
<dbReference type="GO" id="GO:0009507">
    <property type="term" value="C:chloroplast"/>
    <property type="evidence" value="ECO:0007669"/>
    <property type="project" value="UniProtKB-SubCell"/>
</dbReference>
<dbReference type="GO" id="GO:1990904">
    <property type="term" value="C:ribonucleoprotein complex"/>
    <property type="evidence" value="ECO:0007669"/>
    <property type="project" value="UniProtKB-KW"/>
</dbReference>
<dbReference type="GO" id="GO:0005840">
    <property type="term" value="C:ribosome"/>
    <property type="evidence" value="ECO:0007669"/>
    <property type="project" value="UniProtKB-KW"/>
</dbReference>
<dbReference type="GO" id="GO:0070181">
    <property type="term" value="F:small ribosomal subunit rRNA binding"/>
    <property type="evidence" value="ECO:0007669"/>
    <property type="project" value="TreeGrafter"/>
</dbReference>
<dbReference type="GO" id="GO:0003735">
    <property type="term" value="F:structural constituent of ribosome"/>
    <property type="evidence" value="ECO:0007669"/>
    <property type="project" value="InterPro"/>
</dbReference>
<dbReference type="GO" id="GO:0006412">
    <property type="term" value="P:translation"/>
    <property type="evidence" value="ECO:0007669"/>
    <property type="project" value="UniProtKB-UniRule"/>
</dbReference>
<dbReference type="CDD" id="cd15487">
    <property type="entry name" value="bS6_chloro_cyano"/>
    <property type="match status" value="1"/>
</dbReference>
<dbReference type="Gene3D" id="3.30.70.60">
    <property type="match status" value="1"/>
</dbReference>
<dbReference type="HAMAP" id="MF_00360">
    <property type="entry name" value="Ribosomal_bS6"/>
    <property type="match status" value="1"/>
</dbReference>
<dbReference type="InterPro" id="IPR000529">
    <property type="entry name" value="Ribosomal_bS6"/>
</dbReference>
<dbReference type="InterPro" id="IPR035980">
    <property type="entry name" value="Ribosomal_bS6_sf"/>
</dbReference>
<dbReference type="InterPro" id="IPR020814">
    <property type="entry name" value="Ribosomal_S6_plastid/chlpt"/>
</dbReference>
<dbReference type="InterPro" id="IPR014717">
    <property type="entry name" value="Transl_elong_EF1B/ribsomal_bS6"/>
</dbReference>
<dbReference type="NCBIfam" id="TIGR00166">
    <property type="entry name" value="S6"/>
    <property type="match status" value="1"/>
</dbReference>
<dbReference type="PANTHER" id="PTHR21011">
    <property type="entry name" value="MITOCHONDRIAL 28S RIBOSOMAL PROTEIN S6"/>
    <property type="match status" value="1"/>
</dbReference>
<dbReference type="PANTHER" id="PTHR21011:SF1">
    <property type="entry name" value="SMALL RIBOSOMAL SUBUNIT PROTEIN BS6M"/>
    <property type="match status" value="1"/>
</dbReference>
<dbReference type="Pfam" id="PF01250">
    <property type="entry name" value="Ribosomal_S6"/>
    <property type="match status" value="1"/>
</dbReference>
<dbReference type="SUPFAM" id="SSF54995">
    <property type="entry name" value="Ribosomal protein S6"/>
    <property type="match status" value="1"/>
</dbReference>
<keyword id="KW-0150">Chloroplast</keyword>
<keyword id="KW-0934">Plastid</keyword>
<keyword id="KW-0687">Ribonucleoprotein</keyword>
<keyword id="KW-0689">Ribosomal protein</keyword>
<keyword id="KW-0694">RNA-binding</keyword>
<keyword id="KW-0699">rRNA-binding</keyword>
<organism>
    <name type="scientific">Gracilaria tenuistipitata var. liui</name>
    <name type="common">Red alga</name>
    <dbReference type="NCBI Taxonomy" id="285951"/>
    <lineage>
        <taxon>Eukaryota</taxon>
        <taxon>Rhodophyta</taxon>
        <taxon>Florideophyceae</taxon>
        <taxon>Rhodymeniophycidae</taxon>
        <taxon>Gracilariales</taxon>
        <taxon>Gracilariaceae</taxon>
        <taxon>Gracilaria</taxon>
        <taxon>Gracilaria tenuistipitata</taxon>
    </lineage>
</organism>
<evidence type="ECO:0000255" key="1">
    <source>
        <dbReference type="HAMAP-Rule" id="MF_00360"/>
    </source>
</evidence>
<evidence type="ECO:0000305" key="2"/>
<reference key="1">
    <citation type="journal article" date="2004" name="J. Mol. Evol.">
        <title>Comparative analysis of the complete plastid genome sequence of the red alga Gracilaria tenuistipitata var. liui provides insights into the evolution of rhodoplasts and their relationship to other plastids.</title>
        <authorList>
            <person name="Hagopian J.C."/>
            <person name="Reis M."/>
            <person name="Kitajima J.P."/>
            <person name="Bhattacharya D."/>
            <person name="de Oliveira M.C."/>
        </authorList>
    </citation>
    <scope>NUCLEOTIDE SEQUENCE [LARGE SCALE GENOMIC DNA]</scope>
</reference>
<name>RR6_GRATL</name>
<sequence length="103" mass="12222">MNLNKYETIYILQPNITESENLILINEYKALIKKYGGNNIVVQHKGRRHLNYNIKSYYDGIYVQINYTASSNLVRILEKAMRLSQHVIRYMTIKNCHMNDIKI</sequence>
<geneLocation type="chloroplast"/>